<gene>
    <name evidence="1" type="primary">rplB</name>
    <name type="ordered locus">WRi_005160</name>
</gene>
<keyword id="KW-0687">Ribonucleoprotein</keyword>
<keyword id="KW-0689">Ribosomal protein</keyword>
<keyword id="KW-0694">RNA-binding</keyword>
<keyword id="KW-0699">rRNA-binding</keyword>
<reference key="1">
    <citation type="journal article" date="2009" name="Proc. Natl. Acad. Sci. U.S.A.">
        <title>The mosaic genome structure of the Wolbachia wRi strain infecting Drosophila simulans.</title>
        <authorList>
            <person name="Klasson L."/>
            <person name="Westberg J."/>
            <person name="Sapountzis P."/>
            <person name="Naeslund K."/>
            <person name="Lutnaes Y."/>
            <person name="Darby A.C."/>
            <person name="Veneti Z."/>
            <person name="Chen L."/>
            <person name="Braig H.R."/>
            <person name="Garrett R."/>
            <person name="Bourtzis K."/>
            <person name="Andersson S.G."/>
        </authorList>
    </citation>
    <scope>NUCLEOTIDE SEQUENCE [LARGE SCALE GENOMIC DNA]</scope>
    <source>
        <strain>wRi</strain>
    </source>
</reference>
<protein>
    <recommendedName>
        <fullName evidence="1">Large ribosomal subunit protein uL2</fullName>
    </recommendedName>
    <alternativeName>
        <fullName evidence="3">50S ribosomal protein L2</fullName>
    </alternativeName>
</protein>
<evidence type="ECO:0000255" key="1">
    <source>
        <dbReference type="HAMAP-Rule" id="MF_01320"/>
    </source>
</evidence>
<evidence type="ECO:0000256" key="2">
    <source>
        <dbReference type="SAM" id="MobiDB-lite"/>
    </source>
</evidence>
<evidence type="ECO:0000305" key="3"/>
<dbReference type="EMBL" id="CP001391">
    <property type="protein sequence ID" value="ACN95298.1"/>
    <property type="molecule type" value="Genomic_DNA"/>
</dbReference>
<dbReference type="RefSeq" id="WP_012673181.1">
    <property type="nucleotide sequence ID" value="NZ_MKIF01000201.1"/>
</dbReference>
<dbReference type="SMR" id="C0R306"/>
<dbReference type="STRING" id="66084.WRi_005160"/>
<dbReference type="KEGG" id="wri:WRi_005160"/>
<dbReference type="HOGENOM" id="CLU_036235_2_1_5"/>
<dbReference type="Proteomes" id="UP000001293">
    <property type="component" value="Chromosome"/>
</dbReference>
<dbReference type="GO" id="GO:0015934">
    <property type="term" value="C:large ribosomal subunit"/>
    <property type="evidence" value="ECO:0007669"/>
    <property type="project" value="InterPro"/>
</dbReference>
<dbReference type="GO" id="GO:0019843">
    <property type="term" value="F:rRNA binding"/>
    <property type="evidence" value="ECO:0007669"/>
    <property type="project" value="UniProtKB-UniRule"/>
</dbReference>
<dbReference type="GO" id="GO:0003735">
    <property type="term" value="F:structural constituent of ribosome"/>
    <property type="evidence" value="ECO:0007669"/>
    <property type="project" value="InterPro"/>
</dbReference>
<dbReference type="GO" id="GO:0016740">
    <property type="term" value="F:transferase activity"/>
    <property type="evidence" value="ECO:0007669"/>
    <property type="project" value="InterPro"/>
</dbReference>
<dbReference type="GO" id="GO:0002181">
    <property type="term" value="P:cytoplasmic translation"/>
    <property type="evidence" value="ECO:0007669"/>
    <property type="project" value="TreeGrafter"/>
</dbReference>
<dbReference type="FunFam" id="2.30.30.30:FF:000001">
    <property type="entry name" value="50S ribosomal protein L2"/>
    <property type="match status" value="1"/>
</dbReference>
<dbReference type="FunFam" id="4.10.950.10:FF:000001">
    <property type="entry name" value="50S ribosomal protein L2"/>
    <property type="match status" value="1"/>
</dbReference>
<dbReference type="Gene3D" id="2.30.30.30">
    <property type="match status" value="1"/>
</dbReference>
<dbReference type="Gene3D" id="2.40.50.140">
    <property type="entry name" value="Nucleic acid-binding proteins"/>
    <property type="match status" value="1"/>
</dbReference>
<dbReference type="Gene3D" id="4.10.950.10">
    <property type="entry name" value="Ribosomal protein L2, domain 3"/>
    <property type="match status" value="1"/>
</dbReference>
<dbReference type="HAMAP" id="MF_01320_B">
    <property type="entry name" value="Ribosomal_uL2_B"/>
    <property type="match status" value="1"/>
</dbReference>
<dbReference type="InterPro" id="IPR012340">
    <property type="entry name" value="NA-bd_OB-fold"/>
</dbReference>
<dbReference type="InterPro" id="IPR014722">
    <property type="entry name" value="Rib_uL2_dom2"/>
</dbReference>
<dbReference type="InterPro" id="IPR002171">
    <property type="entry name" value="Ribosomal_uL2"/>
</dbReference>
<dbReference type="InterPro" id="IPR005880">
    <property type="entry name" value="Ribosomal_uL2_bac/org-type"/>
</dbReference>
<dbReference type="InterPro" id="IPR022669">
    <property type="entry name" value="Ribosomal_uL2_C"/>
</dbReference>
<dbReference type="InterPro" id="IPR022671">
    <property type="entry name" value="Ribosomal_uL2_CS"/>
</dbReference>
<dbReference type="InterPro" id="IPR014726">
    <property type="entry name" value="Ribosomal_uL2_dom3"/>
</dbReference>
<dbReference type="InterPro" id="IPR022666">
    <property type="entry name" value="Ribosomal_uL2_RNA-bd_dom"/>
</dbReference>
<dbReference type="InterPro" id="IPR008991">
    <property type="entry name" value="Translation_prot_SH3-like_sf"/>
</dbReference>
<dbReference type="NCBIfam" id="TIGR01171">
    <property type="entry name" value="rplB_bact"/>
    <property type="match status" value="1"/>
</dbReference>
<dbReference type="PANTHER" id="PTHR13691:SF5">
    <property type="entry name" value="LARGE RIBOSOMAL SUBUNIT PROTEIN UL2M"/>
    <property type="match status" value="1"/>
</dbReference>
<dbReference type="PANTHER" id="PTHR13691">
    <property type="entry name" value="RIBOSOMAL PROTEIN L2"/>
    <property type="match status" value="1"/>
</dbReference>
<dbReference type="Pfam" id="PF00181">
    <property type="entry name" value="Ribosomal_L2"/>
    <property type="match status" value="1"/>
</dbReference>
<dbReference type="Pfam" id="PF03947">
    <property type="entry name" value="Ribosomal_L2_C"/>
    <property type="match status" value="1"/>
</dbReference>
<dbReference type="PIRSF" id="PIRSF002158">
    <property type="entry name" value="Ribosomal_L2"/>
    <property type="match status" value="1"/>
</dbReference>
<dbReference type="SMART" id="SM01383">
    <property type="entry name" value="Ribosomal_L2"/>
    <property type="match status" value="1"/>
</dbReference>
<dbReference type="SMART" id="SM01382">
    <property type="entry name" value="Ribosomal_L2_C"/>
    <property type="match status" value="1"/>
</dbReference>
<dbReference type="SUPFAM" id="SSF50249">
    <property type="entry name" value="Nucleic acid-binding proteins"/>
    <property type="match status" value="1"/>
</dbReference>
<dbReference type="SUPFAM" id="SSF50104">
    <property type="entry name" value="Translation proteins SH3-like domain"/>
    <property type="match status" value="1"/>
</dbReference>
<dbReference type="PROSITE" id="PS00467">
    <property type="entry name" value="RIBOSOMAL_L2"/>
    <property type="match status" value="1"/>
</dbReference>
<proteinExistence type="inferred from homology"/>
<comment type="function">
    <text evidence="1">One of the primary rRNA binding proteins. Required for association of the 30S and 50S subunits to form the 70S ribosome, for tRNA binding and peptide bond formation. It has been suggested to have peptidyltransferase activity; this is somewhat controversial. Makes several contacts with the 16S rRNA in the 70S ribosome.</text>
</comment>
<comment type="subunit">
    <text evidence="1">Part of the 50S ribosomal subunit. Forms a bridge to the 30S subunit in the 70S ribosome.</text>
</comment>
<comment type="similarity">
    <text evidence="1">Belongs to the universal ribosomal protein uL2 family.</text>
</comment>
<name>RL2_WOLWR</name>
<feature type="chain" id="PRO_1000165781" description="Large ribosomal subunit protein uL2">
    <location>
        <begin position="1"/>
        <end position="274"/>
    </location>
</feature>
<feature type="region of interest" description="Disordered" evidence="2">
    <location>
        <begin position="21"/>
        <end position="59"/>
    </location>
</feature>
<feature type="region of interest" description="Disordered" evidence="2">
    <location>
        <begin position="223"/>
        <end position="274"/>
    </location>
</feature>
<feature type="compositionally biased region" description="Low complexity" evidence="2">
    <location>
        <begin position="32"/>
        <end position="42"/>
    </location>
</feature>
<feature type="compositionally biased region" description="Basic residues" evidence="2">
    <location>
        <begin position="45"/>
        <end position="59"/>
    </location>
</feature>
<feature type="compositionally biased region" description="Basic and acidic residues" evidence="2">
    <location>
        <begin position="263"/>
        <end position="274"/>
    </location>
</feature>
<sequence>MGMKFFNPVTPSSRGTVLVSKVGLSKDEPEKSLTSGKKSSGGRNNHGRITTRHRGGGHKKKYRVIDFKRNRSGQGIVEKIEYDPNRSGFLALISYKEDDIKSYILAPQGMKPGDVVTAGNDADILPGNCLLLKHIPVGSFVHNVELKPGNGAAIARAAGCYAQIVGRDGQYVLLRLRSGQIRLILSSCKATIGVVSNPDHKNRKLGKAGRSRWLGIRPTVRGVAMNPVDHPHGGGEGKTSGGRHPVTPWGVATKGKKTRKRNKSSDKYIKQLKG</sequence>
<organism>
    <name type="scientific">Wolbachia sp. subsp. Drosophila simulans (strain wRi)</name>
    <dbReference type="NCBI Taxonomy" id="66084"/>
    <lineage>
        <taxon>Bacteria</taxon>
        <taxon>Pseudomonadati</taxon>
        <taxon>Pseudomonadota</taxon>
        <taxon>Alphaproteobacteria</taxon>
        <taxon>Rickettsiales</taxon>
        <taxon>Anaplasmataceae</taxon>
        <taxon>Wolbachieae</taxon>
        <taxon>Wolbachia</taxon>
    </lineage>
</organism>
<accession>C0R306</accession>